<evidence type="ECO:0000255" key="1">
    <source>
        <dbReference type="HAMAP-Rule" id="MF_01153"/>
    </source>
</evidence>
<keyword id="KW-0997">Cell inner membrane</keyword>
<keyword id="KW-1003">Cell membrane</keyword>
<keyword id="KW-0143">Chaperone</keyword>
<keyword id="KW-0472">Membrane</keyword>
<keyword id="KW-1185">Reference proteome</keyword>
<keyword id="KW-0812">Transmembrane</keyword>
<keyword id="KW-1133">Transmembrane helix</keyword>
<gene>
    <name evidence="1" type="primary">djlA</name>
    <name type="ordered locus">Z0064</name>
    <name type="ordered locus">ECs0060</name>
</gene>
<name>DJLA_ECO57</name>
<protein>
    <recommendedName>
        <fullName evidence="1">Co-chaperone protein DjlA</fullName>
    </recommendedName>
</protein>
<sequence length="271" mass="30565">MQYWGKIIGVAVALLMGGGFWGVVLGLLIGHMFDKARSRKMAWFANQRERQALFFATTFEVMGHLTKSKGRVTEADIHIASQLMDRMNLHGASRTAAQNAFRVGKSDNYPLREKMRQFRSVCFGRFDLIRMFLEIQIQAAFADGSLHPNERAVLYVIAEELGISRAQFDQFLRMMQGGAQFGGGYQQQSGGGNWQQAQRGPTLEDACNVLGVKPTDDATTIKRAYRKLMSEHHPDKLVAKGLPPEMMEMAKQKAQEIQQAYELIKQQKGFK</sequence>
<proteinExistence type="inferred from homology"/>
<reference key="1">
    <citation type="journal article" date="2001" name="Nature">
        <title>Genome sequence of enterohaemorrhagic Escherichia coli O157:H7.</title>
        <authorList>
            <person name="Perna N.T."/>
            <person name="Plunkett G. III"/>
            <person name="Burland V."/>
            <person name="Mau B."/>
            <person name="Glasner J.D."/>
            <person name="Rose D.J."/>
            <person name="Mayhew G.F."/>
            <person name="Evans P.S."/>
            <person name="Gregor J."/>
            <person name="Kirkpatrick H.A."/>
            <person name="Posfai G."/>
            <person name="Hackett J."/>
            <person name="Klink S."/>
            <person name="Boutin A."/>
            <person name="Shao Y."/>
            <person name="Miller L."/>
            <person name="Grotbeck E.J."/>
            <person name="Davis N.W."/>
            <person name="Lim A."/>
            <person name="Dimalanta E.T."/>
            <person name="Potamousis K."/>
            <person name="Apodaca J."/>
            <person name="Anantharaman T.S."/>
            <person name="Lin J."/>
            <person name="Yen G."/>
            <person name="Schwartz D.C."/>
            <person name="Welch R.A."/>
            <person name="Blattner F.R."/>
        </authorList>
    </citation>
    <scope>NUCLEOTIDE SEQUENCE [LARGE SCALE GENOMIC DNA]</scope>
    <source>
        <strain>O157:H7 / EDL933 / ATCC 700927 / EHEC</strain>
    </source>
</reference>
<reference key="2">
    <citation type="journal article" date="2001" name="DNA Res.">
        <title>Complete genome sequence of enterohemorrhagic Escherichia coli O157:H7 and genomic comparison with a laboratory strain K-12.</title>
        <authorList>
            <person name="Hayashi T."/>
            <person name="Makino K."/>
            <person name="Ohnishi M."/>
            <person name="Kurokawa K."/>
            <person name="Ishii K."/>
            <person name="Yokoyama K."/>
            <person name="Han C.-G."/>
            <person name="Ohtsubo E."/>
            <person name="Nakayama K."/>
            <person name="Murata T."/>
            <person name="Tanaka M."/>
            <person name="Tobe T."/>
            <person name="Iida T."/>
            <person name="Takami H."/>
            <person name="Honda T."/>
            <person name="Sasakawa C."/>
            <person name="Ogasawara N."/>
            <person name="Yasunaga T."/>
            <person name="Kuhara S."/>
            <person name="Shiba T."/>
            <person name="Hattori M."/>
            <person name="Shinagawa H."/>
        </authorList>
    </citation>
    <scope>NUCLEOTIDE SEQUENCE [LARGE SCALE GENOMIC DNA]</scope>
    <source>
        <strain>O157:H7 / Sakai / RIMD 0509952 / EHEC</strain>
    </source>
</reference>
<comment type="function">
    <text evidence="1">Regulatory DnaK co-chaperone. Direct interaction between DnaK and DjlA is needed for the induction of the wcaABCDE operon, involved in the synthesis of a colanic acid polysaccharide capsule, possibly through activation of the RcsB/RcsC phosphotransfer signaling pathway. The colanic acid capsule may help the bacterium survive conditions outside the host.</text>
</comment>
<comment type="subunit">
    <text evidence="1">Homodimer.</text>
</comment>
<comment type="subcellular location">
    <subcellularLocation>
        <location evidence="1">Cell inner membrane</location>
        <topology evidence="1">Single-pass type III membrane protein</topology>
    </subcellularLocation>
</comment>
<comment type="domain">
    <text evidence="1">The transmembrane domain is a dimerization domain.</text>
</comment>
<dbReference type="EMBL" id="AE005174">
    <property type="protein sequence ID" value="AAG54360.1"/>
    <property type="molecule type" value="Genomic_DNA"/>
</dbReference>
<dbReference type="EMBL" id="BA000007">
    <property type="protein sequence ID" value="BAB33483.1"/>
    <property type="molecule type" value="Genomic_DNA"/>
</dbReference>
<dbReference type="PIR" id="D85487">
    <property type="entry name" value="D85487"/>
</dbReference>
<dbReference type="PIR" id="D90636">
    <property type="entry name" value="D90636"/>
</dbReference>
<dbReference type="RefSeq" id="NP_308087.1">
    <property type="nucleotide sequence ID" value="NC_002695.1"/>
</dbReference>
<dbReference type="RefSeq" id="WP_001200573.1">
    <property type="nucleotide sequence ID" value="NZ_VOAI01000002.1"/>
</dbReference>
<dbReference type="SMR" id="Q7AHS5"/>
<dbReference type="STRING" id="155864.Z0064"/>
<dbReference type="GeneID" id="913460"/>
<dbReference type="GeneID" id="93777380"/>
<dbReference type="KEGG" id="ece:Z0064"/>
<dbReference type="KEGG" id="ecs:ECs_0060"/>
<dbReference type="PATRIC" id="fig|386585.9.peg.159"/>
<dbReference type="eggNOG" id="COG1076">
    <property type="taxonomic scope" value="Bacteria"/>
</dbReference>
<dbReference type="HOGENOM" id="CLU_066221_1_0_6"/>
<dbReference type="OMA" id="MQYWGKL"/>
<dbReference type="Proteomes" id="UP000000558">
    <property type="component" value="Chromosome"/>
</dbReference>
<dbReference type="Proteomes" id="UP000002519">
    <property type="component" value="Chromosome"/>
</dbReference>
<dbReference type="GO" id="GO:0005886">
    <property type="term" value="C:plasma membrane"/>
    <property type="evidence" value="ECO:0007669"/>
    <property type="project" value="UniProtKB-SubCell"/>
</dbReference>
<dbReference type="GO" id="GO:0051087">
    <property type="term" value="F:protein-folding chaperone binding"/>
    <property type="evidence" value="ECO:0007669"/>
    <property type="project" value="InterPro"/>
</dbReference>
<dbReference type="CDD" id="cd06257">
    <property type="entry name" value="DnaJ"/>
    <property type="match status" value="1"/>
</dbReference>
<dbReference type="CDD" id="cd07316">
    <property type="entry name" value="terB_like_DjlA"/>
    <property type="match status" value="1"/>
</dbReference>
<dbReference type="FunFam" id="1.10.287.110:FF:000011">
    <property type="entry name" value="Co-chaperone protein DjlA"/>
    <property type="match status" value="1"/>
</dbReference>
<dbReference type="FunFam" id="1.10.3680.10:FF:000001">
    <property type="entry name" value="Co-chaperone protein DjlA"/>
    <property type="match status" value="1"/>
</dbReference>
<dbReference type="Gene3D" id="1.10.287.110">
    <property type="entry name" value="DnaJ domain"/>
    <property type="match status" value="1"/>
</dbReference>
<dbReference type="Gene3D" id="1.10.3680.10">
    <property type="entry name" value="TerB-like"/>
    <property type="match status" value="1"/>
</dbReference>
<dbReference type="HAMAP" id="MF_01153">
    <property type="entry name" value="DjlA"/>
    <property type="match status" value="1"/>
</dbReference>
<dbReference type="InterPro" id="IPR023749">
    <property type="entry name" value="DjlA"/>
</dbReference>
<dbReference type="InterPro" id="IPR050817">
    <property type="entry name" value="DjlA_DnaK_co-chaperone"/>
</dbReference>
<dbReference type="InterPro" id="IPR007791">
    <property type="entry name" value="DjlA_N"/>
</dbReference>
<dbReference type="InterPro" id="IPR001623">
    <property type="entry name" value="DnaJ_domain"/>
</dbReference>
<dbReference type="InterPro" id="IPR036869">
    <property type="entry name" value="J_dom_sf"/>
</dbReference>
<dbReference type="InterPro" id="IPR029024">
    <property type="entry name" value="TerB-like"/>
</dbReference>
<dbReference type="NCBIfam" id="NF006948">
    <property type="entry name" value="PRK09430.1"/>
    <property type="match status" value="1"/>
</dbReference>
<dbReference type="PANTHER" id="PTHR24074">
    <property type="entry name" value="CO-CHAPERONE PROTEIN DJLA"/>
    <property type="match status" value="1"/>
</dbReference>
<dbReference type="Pfam" id="PF00226">
    <property type="entry name" value="DnaJ"/>
    <property type="match status" value="1"/>
</dbReference>
<dbReference type="Pfam" id="PF05099">
    <property type="entry name" value="TerB"/>
    <property type="match status" value="1"/>
</dbReference>
<dbReference type="PRINTS" id="PR00625">
    <property type="entry name" value="JDOMAIN"/>
</dbReference>
<dbReference type="SMART" id="SM00271">
    <property type="entry name" value="DnaJ"/>
    <property type="match status" value="1"/>
</dbReference>
<dbReference type="SUPFAM" id="SSF46565">
    <property type="entry name" value="Chaperone J-domain"/>
    <property type="match status" value="1"/>
</dbReference>
<dbReference type="PROSITE" id="PS50076">
    <property type="entry name" value="DNAJ_2"/>
    <property type="match status" value="1"/>
</dbReference>
<feature type="chain" id="PRO_0000209425" description="Co-chaperone protein DjlA">
    <location>
        <begin position="1"/>
        <end position="271"/>
    </location>
</feature>
<feature type="topological domain" description="Periplasmic" evidence="1">
    <location>
        <begin position="1"/>
        <end position="6"/>
    </location>
</feature>
<feature type="transmembrane region" description="Helical" evidence="1">
    <location>
        <begin position="7"/>
        <end position="31"/>
    </location>
</feature>
<feature type="topological domain" description="Cytoplasmic" evidence="1">
    <location>
        <begin position="32"/>
        <end position="271"/>
    </location>
</feature>
<feature type="domain" description="J" evidence="1">
    <location>
        <begin position="205"/>
        <end position="271"/>
    </location>
</feature>
<organism>
    <name type="scientific">Escherichia coli O157:H7</name>
    <dbReference type="NCBI Taxonomy" id="83334"/>
    <lineage>
        <taxon>Bacteria</taxon>
        <taxon>Pseudomonadati</taxon>
        <taxon>Pseudomonadota</taxon>
        <taxon>Gammaproteobacteria</taxon>
        <taxon>Enterobacterales</taxon>
        <taxon>Enterobacteriaceae</taxon>
        <taxon>Escherichia</taxon>
    </lineage>
</organism>
<accession>Q7AHS5</accession>
<accession>Q8XA12</accession>